<evidence type="ECO:0000250" key="1"/>
<evidence type="ECO:0000250" key="2">
    <source>
        <dbReference type="UniProtKB" id="P31749"/>
    </source>
</evidence>
<evidence type="ECO:0000250" key="3">
    <source>
        <dbReference type="UniProtKB" id="P31750"/>
    </source>
</evidence>
<evidence type="ECO:0000250" key="4">
    <source>
        <dbReference type="UniProtKB" id="P31751"/>
    </source>
</evidence>
<evidence type="ECO:0000250" key="5">
    <source>
        <dbReference type="UniProtKB" id="Q60823"/>
    </source>
</evidence>
<evidence type="ECO:0000250" key="6">
    <source>
        <dbReference type="UniProtKB" id="Q9Y243"/>
    </source>
</evidence>
<evidence type="ECO:0000255" key="7">
    <source>
        <dbReference type="PROSITE-ProRule" id="PRU00145"/>
    </source>
</evidence>
<evidence type="ECO:0000255" key="8">
    <source>
        <dbReference type="PROSITE-ProRule" id="PRU00159"/>
    </source>
</evidence>
<evidence type="ECO:0000255" key="9">
    <source>
        <dbReference type="PROSITE-ProRule" id="PRU00618"/>
    </source>
</evidence>
<evidence type="ECO:0000255" key="10">
    <source>
        <dbReference type="PROSITE-ProRule" id="PRU10027"/>
    </source>
</evidence>
<evidence type="ECO:0000256" key="11">
    <source>
        <dbReference type="SAM" id="MobiDB-lite"/>
    </source>
</evidence>
<evidence type="ECO:0000269" key="12">
    <source>
    </source>
</evidence>
<evidence type="ECO:0000269" key="13">
    <source>
    </source>
</evidence>
<evidence type="ECO:0000269" key="14">
    <source>
    </source>
</evidence>
<evidence type="ECO:0000269" key="15">
    <source>
    </source>
</evidence>
<evidence type="ECO:0000269" key="16">
    <source>
    </source>
</evidence>
<evidence type="ECO:0000269" key="17">
    <source>
    </source>
</evidence>
<evidence type="ECO:0000303" key="18">
    <source>
    </source>
</evidence>
<evidence type="ECO:0000305" key="19"/>
<gene>
    <name type="primary">Akt3</name>
</gene>
<organism>
    <name type="scientific">Mus musculus</name>
    <name type="common">Mouse</name>
    <dbReference type="NCBI Taxonomy" id="10090"/>
    <lineage>
        <taxon>Eukaryota</taxon>
        <taxon>Metazoa</taxon>
        <taxon>Chordata</taxon>
        <taxon>Craniata</taxon>
        <taxon>Vertebrata</taxon>
        <taxon>Euteleostomi</taxon>
        <taxon>Mammalia</taxon>
        <taxon>Eutheria</taxon>
        <taxon>Euarchontoglires</taxon>
        <taxon>Glires</taxon>
        <taxon>Rodentia</taxon>
        <taxon>Myomorpha</taxon>
        <taxon>Muroidea</taxon>
        <taxon>Muridae</taxon>
        <taxon>Murinae</taxon>
        <taxon>Mus</taxon>
        <taxon>Mus</taxon>
    </lineage>
</organism>
<keyword id="KW-0007">Acetylation</keyword>
<keyword id="KW-0025">Alternative splicing</keyword>
<keyword id="KW-0067">ATP-binding</keyword>
<keyword id="KW-0963">Cytoplasm</keyword>
<keyword id="KW-1015">Disulfide bond</keyword>
<keyword id="KW-0325">Glycoprotein</keyword>
<keyword id="KW-0418">Kinase</keyword>
<keyword id="KW-0472">Membrane</keyword>
<keyword id="KW-0547">Nucleotide-binding</keyword>
<keyword id="KW-0539">Nucleus</keyword>
<keyword id="KW-0597">Phosphoprotein</keyword>
<keyword id="KW-1185">Reference proteome</keyword>
<keyword id="KW-0723">Serine/threonine-protein kinase</keyword>
<keyword id="KW-0808">Transferase</keyword>
<keyword id="KW-0832">Ubl conjugation</keyword>
<protein>
    <recommendedName>
        <fullName>RAC-gamma serine/threonine-protein kinase</fullName>
        <ecNumber>2.7.11.1</ecNumber>
    </recommendedName>
    <alternativeName>
        <fullName>Protein kinase Akt-3</fullName>
    </alternativeName>
    <alternativeName>
        <fullName>Protein kinase B gamma</fullName>
        <shortName>PKB gamma</shortName>
    </alternativeName>
    <alternativeName>
        <fullName>RAC-PK-gamma</fullName>
    </alternativeName>
</protein>
<name>AKT3_MOUSE</name>
<accession>Q9WUA6</accession>
<dbReference type="EC" id="2.7.11.1"/>
<dbReference type="EMBL" id="AF124142">
    <property type="protein sequence ID" value="AAD29090.1"/>
    <property type="molecule type" value="mRNA"/>
</dbReference>
<dbReference type="CCDS" id="CCDS35799.1">
    <molecule id="Q9WUA6-1"/>
</dbReference>
<dbReference type="RefSeq" id="NP_035915.3">
    <molecule id="Q9WUA6-1"/>
    <property type="nucleotide sequence ID" value="NM_011785.3"/>
</dbReference>
<dbReference type="RefSeq" id="XP_006496881.1">
    <molecule id="Q9WUA6-1"/>
    <property type="nucleotide sequence ID" value="XM_006496818.5"/>
</dbReference>
<dbReference type="RefSeq" id="XP_006496882.1">
    <molecule id="Q9WUA6-1"/>
    <property type="nucleotide sequence ID" value="XM_006496819.5"/>
</dbReference>
<dbReference type="RefSeq" id="XP_030109770.1">
    <molecule id="Q9WUA6-1"/>
    <property type="nucleotide sequence ID" value="XM_030253910.1"/>
</dbReference>
<dbReference type="SMR" id="Q9WUA6"/>
<dbReference type="BioGRID" id="204720">
    <property type="interactions" value="10"/>
</dbReference>
<dbReference type="FunCoup" id="Q9WUA6">
    <property type="interactions" value="2366"/>
</dbReference>
<dbReference type="STRING" id="10090.ENSMUSP00000106789"/>
<dbReference type="GlyCosmos" id="Q9WUA6">
    <property type="glycosylation" value="2 sites, No reported glycans"/>
</dbReference>
<dbReference type="GlyGen" id="Q9WUA6">
    <property type="glycosylation" value="3 sites, 1 O-linked glycan (1 site)"/>
</dbReference>
<dbReference type="iPTMnet" id="Q9WUA6"/>
<dbReference type="PhosphoSitePlus" id="Q9WUA6"/>
<dbReference type="jPOST" id="Q9WUA6"/>
<dbReference type="PaxDb" id="10090-ENSMUSP00000106789"/>
<dbReference type="PeptideAtlas" id="Q9WUA6"/>
<dbReference type="ProteomicsDB" id="296017">
    <molecule id="Q9WUA6-1"/>
</dbReference>
<dbReference type="ProteomicsDB" id="296018">
    <molecule id="Q9WUA6-2"/>
</dbReference>
<dbReference type="Pumba" id="Q9WUA6"/>
<dbReference type="Antibodypedia" id="3402">
    <property type="antibodies" value="1124 antibodies from 45 providers"/>
</dbReference>
<dbReference type="DNASU" id="23797"/>
<dbReference type="Ensembl" id="ENSMUST00000019843.15">
    <molecule id="Q9WUA6-2"/>
    <property type="protein sequence ID" value="ENSMUSP00000019843.9"/>
    <property type="gene ID" value="ENSMUSG00000019699.17"/>
</dbReference>
<dbReference type="Ensembl" id="ENSMUST00000111159.2">
    <molecule id="Q9WUA6-1"/>
    <property type="protein sequence ID" value="ENSMUSP00000106789.2"/>
    <property type="gene ID" value="ENSMUSG00000019699.17"/>
</dbReference>
<dbReference type="Ensembl" id="ENSMUST00000111160.9">
    <molecule id="Q9WUA6-1"/>
    <property type="protein sequence ID" value="ENSMUSP00000106790.3"/>
    <property type="gene ID" value="ENSMUSG00000019699.17"/>
</dbReference>
<dbReference type="GeneID" id="23797"/>
<dbReference type="KEGG" id="mmu:23797"/>
<dbReference type="UCSC" id="uc007duk.2">
    <molecule id="Q9WUA6-1"/>
    <property type="organism name" value="mouse"/>
</dbReference>
<dbReference type="AGR" id="MGI:1345147"/>
<dbReference type="CTD" id="10000"/>
<dbReference type="MGI" id="MGI:1345147">
    <property type="gene designation" value="Akt3"/>
</dbReference>
<dbReference type="VEuPathDB" id="HostDB:ENSMUSG00000019699"/>
<dbReference type="eggNOG" id="KOG0690">
    <property type="taxonomic scope" value="Eukaryota"/>
</dbReference>
<dbReference type="GeneTree" id="ENSGT00940000157060"/>
<dbReference type="HOGENOM" id="CLU_000288_11_0_1"/>
<dbReference type="InParanoid" id="Q9WUA6"/>
<dbReference type="OMA" id="VIERMFH"/>
<dbReference type="OrthoDB" id="63267at2759"/>
<dbReference type="PhylomeDB" id="Q9WUA6"/>
<dbReference type="TreeFam" id="TF102004"/>
<dbReference type="BRENDA" id="2.7.11.1">
    <property type="organism ID" value="3474"/>
</dbReference>
<dbReference type="Reactome" id="R-MMU-1257604">
    <property type="pathway name" value="PIP3 activates AKT signaling"/>
</dbReference>
<dbReference type="Reactome" id="R-MMU-1358803">
    <property type="pathway name" value="Downregulation of ERBB2:ERBB3 signaling"/>
</dbReference>
<dbReference type="Reactome" id="R-MMU-198323">
    <property type="pathway name" value="AKT phosphorylates targets in the cytosol"/>
</dbReference>
<dbReference type="Reactome" id="R-MMU-198693">
    <property type="pathway name" value="AKT phosphorylates targets in the nucleus"/>
</dbReference>
<dbReference type="Reactome" id="R-MMU-199418">
    <property type="pathway name" value="Negative regulation of the PI3K/AKT network"/>
</dbReference>
<dbReference type="Reactome" id="R-MMU-211163">
    <property type="pathway name" value="AKT-mediated inactivation of FOXO1A"/>
</dbReference>
<dbReference type="Reactome" id="R-MMU-389357">
    <property type="pathway name" value="CD28 dependent PI3K/Akt signaling"/>
</dbReference>
<dbReference type="Reactome" id="R-MMU-389513">
    <property type="pathway name" value="Co-inhibition by CTLA4"/>
</dbReference>
<dbReference type="Reactome" id="R-MMU-392451">
    <property type="pathway name" value="G beta:gamma signalling through PI3Kgamma"/>
</dbReference>
<dbReference type="Reactome" id="R-MMU-5218920">
    <property type="pathway name" value="VEGFR2 mediated vascular permeability"/>
</dbReference>
<dbReference type="Reactome" id="R-MMU-5628897">
    <property type="pathway name" value="TP53 Regulates Metabolic Genes"/>
</dbReference>
<dbReference type="Reactome" id="R-MMU-6804757">
    <property type="pathway name" value="Regulation of TP53 Degradation"/>
</dbReference>
<dbReference type="Reactome" id="R-MMU-6804758">
    <property type="pathway name" value="Regulation of TP53 Activity through Acetylation"/>
</dbReference>
<dbReference type="Reactome" id="R-MMU-6804759">
    <property type="pathway name" value="Regulation of TP53 Activity through Association with Co-factors"/>
</dbReference>
<dbReference type="Reactome" id="R-MMU-69202">
    <property type="pathway name" value="Cyclin E associated events during G1/S transition"/>
</dbReference>
<dbReference type="Reactome" id="R-MMU-69656">
    <property type="pathway name" value="Cyclin A:Cdk2-associated events at S phase entry"/>
</dbReference>
<dbReference type="Reactome" id="R-MMU-8876198">
    <property type="pathway name" value="RAB GEFs exchange GTP for GDP on RABs"/>
</dbReference>
<dbReference type="Reactome" id="R-MMU-8948751">
    <property type="pathway name" value="Regulation of PTEN stability and activity"/>
</dbReference>
<dbReference type="Reactome" id="R-MMU-9607240">
    <property type="pathway name" value="FLT3 Signaling"/>
</dbReference>
<dbReference type="Reactome" id="R-MMU-9614399">
    <property type="pathway name" value="Regulation of localization of FOXO transcription factors"/>
</dbReference>
<dbReference type="Reactome" id="R-MMU-9634638">
    <property type="pathway name" value="Estrogen-dependent nuclear events downstream of ESR-membrane signaling"/>
</dbReference>
<dbReference type="Reactome" id="R-MMU-9755511">
    <property type="pathway name" value="KEAP1-NFE2L2 pathway"/>
</dbReference>
<dbReference type="Reactome" id="R-MMU-9856649">
    <property type="pathway name" value="Transcriptional and post-translational regulation of MITF-M expression and activity"/>
</dbReference>
<dbReference type="BioGRID-ORCS" id="23797">
    <property type="hits" value="4 hits in 80 CRISPR screens"/>
</dbReference>
<dbReference type="ChiTaRS" id="Akt3">
    <property type="organism name" value="mouse"/>
</dbReference>
<dbReference type="PRO" id="PR:Q9WUA6"/>
<dbReference type="Proteomes" id="UP000000589">
    <property type="component" value="Chromosome 1"/>
</dbReference>
<dbReference type="RNAct" id="Q9WUA6">
    <property type="molecule type" value="protein"/>
</dbReference>
<dbReference type="Bgee" id="ENSMUSG00000019699">
    <property type="expression patterns" value="Expressed in cortical plate and 233 other cell types or tissues"/>
</dbReference>
<dbReference type="GO" id="GO:0036064">
    <property type="term" value="C:ciliary basal body"/>
    <property type="evidence" value="ECO:0007669"/>
    <property type="project" value="Ensembl"/>
</dbReference>
<dbReference type="GO" id="GO:0005829">
    <property type="term" value="C:cytosol"/>
    <property type="evidence" value="ECO:0007669"/>
    <property type="project" value="Ensembl"/>
</dbReference>
<dbReference type="GO" id="GO:0005794">
    <property type="term" value="C:Golgi apparatus"/>
    <property type="evidence" value="ECO:0007669"/>
    <property type="project" value="Ensembl"/>
</dbReference>
<dbReference type="GO" id="GO:0005654">
    <property type="term" value="C:nucleoplasm"/>
    <property type="evidence" value="ECO:0007669"/>
    <property type="project" value="Ensembl"/>
</dbReference>
<dbReference type="GO" id="GO:0005886">
    <property type="term" value="C:plasma membrane"/>
    <property type="evidence" value="ECO:0000266"/>
    <property type="project" value="MGI"/>
</dbReference>
<dbReference type="GO" id="GO:0005524">
    <property type="term" value="F:ATP binding"/>
    <property type="evidence" value="ECO:0007669"/>
    <property type="project" value="UniProtKB-KW"/>
</dbReference>
<dbReference type="GO" id="GO:0004672">
    <property type="term" value="F:protein kinase activity"/>
    <property type="evidence" value="ECO:0000266"/>
    <property type="project" value="MGI"/>
</dbReference>
<dbReference type="GO" id="GO:0106310">
    <property type="term" value="F:protein serine kinase activity"/>
    <property type="evidence" value="ECO:0007669"/>
    <property type="project" value="RHEA"/>
</dbReference>
<dbReference type="GO" id="GO:0004674">
    <property type="term" value="F:protein serine/threonine kinase activity"/>
    <property type="evidence" value="ECO:0000314"/>
    <property type="project" value="UniProtKB"/>
</dbReference>
<dbReference type="GO" id="GO:0048854">
    <property type="term" value="P:brain morphogenesis"/>
    <property type="evidence" value="ECO:0000315"/>
    <property type="project" value="MGI"/>
</dbReference>
<dbReference type="GO" id="GO:0032869">
    <property type="term" value="P:cellular response to insulin stimulus"/>
    <property type="evidence" value="ECO:0000266"/>
    <property type="project" value="MGI"/>
</dbReference>
<dbReference type="GO" id="GO:0048873">
    <property type="term" value="P:homeostasis of number of cells within a tissue"/>
    <property type="evidence" value="ECO:0000315"/>
    <property type="project" value="MGI"/>
</dbReference>
<dbReference type="GO" id="GO:0000002">
    <property type="term" value="P:mitochondrial genome maintenance"/>
    <property type="evidence" value="ECO:0007669"/>
    <property type="project" value="Ensembl"/>
</dbReference>
<dbReference type="GO" id="GO:2000773">
    <property type="term" value="P:negative regulation of cellular senescence"/>
    <property type="evidence" value="ECO:0007669"/>
    <property type="project" value="Ensembl"/>
</dbReference>
<dbReference type="GO" id="GO:1903898">
    <property type="term" value="P:negative regulation of PERK-mediated unfolded protein response"/>
    <property type="evidence" value="ECO:0000314"/>
    <property type="project" value="UniProtKB"/>
</dbReference>
<dbReference type="GO" id="GO:0045766">
    <property type="term" value="P:positive regulation of angiogenesis"/>
    <property type="evidence" value="ECO:0000315"/>
    <property type="project" value="BHF-UCL"/>
</dbReference>
<dbReference type="GO" id="GO:1905653">
    <property type="term" value="P:positive regulation of artery morphogenesis"/>
    <property type="evidence" value="ECO:0000315"/>
    <property type="project" value="BHF-UCL"/>
</dbReference>
<dbReference type="GO" id="GO:0090050">
    <property type="term" value="P:positive regulation of cell migration involved in sprouting angiogenesis"/>
    <property type="evidence" value="ECO:0007669"/>
    <property type="project" value="Ensembl"/>
</dbReference>
<dbReference type="GO" id="GO:0045793">
    <property type="term" value="P:positive regulation of cell size"/>
    <property type="evidence" value="ECO:0000315"/>
    <property type="project" value="MGI"/>
</dbReference>
<dbReference type="GO" id="GO:0010765">
    <property type="term" value="P:positive regulation of sodium ion transport"/>
    <property type="evidence" value="ECO:0000266"/>
    <property type="project" value="MGI"/>
</dbReference>
<dbReference type="GO" id="GO:0032008">
    <property type="term" value="P:positive regulation of TOR signaling"/>
    <property type="evidence" value="ECO:0000315"/>
    <property type="project" value="MGI"/>
</dbReference>
<dbReference type="GO" id="GO:1905564">
    <property type="term" value="P:positive regulation of vascular endothelial cell proliferation"/>
    <property type="evidence" value="ECO:0007669"/>
    <property type="project" value="Ensembl"/>
</dbReference>
<dbReference type="GO" id="GO:0007165">
    <property type="term" value="P:signal transduction"/>
    <property type="evidence" value="ECO:0007669"/>
    <property type="project" value="Ensembl"/>
</dbReference>
<dbReference type="CDD" id="cd01241">
    <property type="entry name" value="PH_PKB"/>
    <property type="match status" value="1"/>
</dbReference>
<dbReference type="CDD" id="cd05593">
    <property type="entry name" value="STKc_PKB_gamma"/>
    <property type="match status" value="1"/>
</dbReference>
<dbReference type="FunFam" id="1.10.510.10:FF:000033">
    <property type="entry name" value="Non-specific serine/threonine protein kinase"/>
    <property type="match status" value="1"/>
</dbReference>
<dbReference type="FunFam" id="2.30.29.30:FF:000027">
    <property type="entry name" value="Non-specific serine/threonine protein kinase"/>
    <property type="match status" value="1"/>
</dbReference>
<dbReference type="FunFam" id="3.30.200.20:FF:000838">
    <property type="entry name" value="Non-specific serine/threonine protein kinase"/>
    <property type="match status" value="1"/>
</dbReference>
<dbReference type="Gene3D" id="3.30.200.20">
    <property type="entry name" value="Phosphorylase Kinase, domain 1"/>
    <property type="match status" value="1"/>
</dbReference>
<dbReference type="Gene3D" id="2.30.29.30">
    <property type="entry name" value="Pleckstrin-homology domain (PH domain)/Phosphotyrosine-binding domain (PTB)"/>
    <property type="match status" value="1"/>
</dbReference>
<dbReference type="Gene3D" id="1.10.510.10">
    <property type="entry name" value="Transferase(Phosphotransferase) domain 1"/>
    <property type="match status" value="1"/>
</dbReference>
<dbReference type="InterPro" id="IPR000961">
    <property type="entry name" value="AGC-kinase_C"/>
</dbReference>
<dbReference type="InterPro" id="IPR034675">
    <property type="entry name" value="Akt3"/>
</dbReference>
<dbReference type="InterPro" id="IPR011009">
    <property type="entry name" value="Kinase-like_dom_sf"/>
</dbReference>
<dbReference type="InterPro" id="IPR011993">
    <property type="entry name" value="PH-like_dom_sf"/>
</dbReference>
<dbReference type="InterPro" id="IPR001849">
    <property type="entry name" value="PH_domain"/>
</dbReference>
<dbReference type="InterPro" id="IPR039026">
    <property type="entry name" value="PH_PKB"/>
</dbReference>
<dbReference type="InterPro" id="IPR017892">
    <property type="entry name" value="Pkinase_C"/>
</dbReference>
<dbReference type="InterPro" id="IPR000719">
    <property type="entry name" value="Prot_kinase_dom"/>
</dbReference>
<dbReference type="InterPro" id="IPR017441">
    <property type="entry name" value="Protein_kinase_ATP_BS"/>
</dbReference>
<dbReference type="InterPro" id="IPR008271">
    <property type="entry name" value="Ser/Thr_kinase_AS"/>
</dbReference>
<dbReference type="PANTHER" id="PTHR24351">
    <property type="entry name" value="RIBOSOMAL PROTEIN S6 KINASE"/>
    <property type="match status" value="1"/>
</dbReference>
<dbReference type="Pfam" id="PF00169">
    <property type="entry name" value="PH"/>
    <property type="match status" value="1"/>
</dbReference>
<dbReference type="Pfam" id="PF00069">
    <property type="entry name" value="Pkinase"/>
    <property type="match status" value="1"/>
</dbReference>
<dbReference type="Pfam" id="PF00433">
    <property type="entry name" value="Pkinase_C"/>
    <property type="match status" value="1"/>
</dbReference>
<dbReference type="SMART" id="SM00233">
    <property type="entry name" value="PH"/>
    <property type="match status" value="1"/>
</dbReference>
<dbReference type="SMART" id="SM00133">
    <property type="entry name" value="S_TK_X"/>
    <property type="match status" value="1"/>
</dbReference>
<dbReference type="SMART" id="SM00220">
    <property type="entry name" value="S_TKc"/>
    <property type="match status" value="1"/>
</dbReference>
<dbReference type="SUPFAM" id="SSF50729">
    <property type="entry name" value="PH domain-like"/>
    <property type="match status" value="1"/>
</dbReference>
<dbReference type="SUPFAM" id="SSF56112">
    <property type="entry name" value="Protein kinase-like (PK-like)"/>
    <property type="match status" value="1"/>
</dbReference>
<dbReference type="PROSITE" id="PS51285">
    <property type="entry name" value="AGC_KINASE_CTER"/>
    <property type="match status" value="1"/>
</dbReference>
<dbReference type="PROSITE" id="PS50003">
    <property type="entry name" value="PH_DOMAIN"/>
    <property type="match status" value="1"/>
</dbReference>
<dbReference type="PROSITE" id="PS00107">
    <property type="entry name" value="PROTEIN_KINASE_ATP"/>
    <property type="match status" value="1"/>
</dbReference>
<dbReference type="PROSITE" id="PS50011">
    <property type="entry name" value="PROTEIN_KINASE_DOM"/>
    <property type="match status" value="1"/>
</dbReference>
<dbReference type="PROSITE" id="PS00108">
    <property type="entry name" value="PROTEIN_KINASE_ST"/>
    <property type="match status" value="1"/>
</dbReference>
<sequence>MSDVTIVKEGWVQKRGEYIKNWRPRYFLLKTDGSFIGYKEKPQDVDLPYPLNNFSVAKCQLMKTERPKPNTFIIRCLQWTTVIERTFHVDTPEEREEWTEAIQAVADRLQRQEEERMNCSPTSQIDNIGEEEMDASTTHHKRKTMNDFDYLKLLGKGTFGKVILVREKASGKYYAMKILKKEVIIAKDEVAHTLTESRVLKNTRHPFLTSLKYSFQTKDRLCFVMEYVNGGELFFHLSRERVFSEDRTRFYGAEIVSALDYLHSGKIVYRDLKLENLMLDKDGHIKITDFGLCKEGITDAATMKTFCGTPEYLAPEVLEDNDYGRAVDWWGLGVVMYEMMCGRLPFYNQDHEKLFELILMEDIKFPRTLSSDAKSLLSGLLIKDPNKRLGGGPDDAKEIMRHSFFSGVNWQDVYDKKLVPPFKPQVTSETDTRYFDEEFTAQTITITPPEKYDDDGMDGMDNERRPHFPQFSYSASGRE</sequence>
<proteinExistence type="evidence at protein level"/>
<feature type="initiator methionine" description="Removed" evidence="6">
    <location>
        <position position="1"/>
    </location>
</feature>
<feature type="chain" id="PRO_0000085612" description="RAC-gamma serine/threonine-protein kinase">
    <location>
        <begin position="2"/>
        <end position="479"/>
    </location>
</feature>
<feature type="domain" description="PH" evidence="7">
    <location>
        <begin position="5"/>
        <end position="107"/>
    </location>
</feature>
<feature type="domain" description="Protein kinase" evidence="8">
    <location>
        <begin position="148"/>
        <end position="405"/>
    </location>
</feature>
<feature type="domain" description="AGC-kinase C-terminal" evidence="9">
    <location>
        <begin position="406"/>
        <end position="479"/>
    </location>
</feature>
<feature type="region of interest" description="Disordered" evidence="11">
    <location>
        <begin position="445"/>
        <end position="479"/>
    </location>
</feature>
<feature type="active site" description="Proton acceptor" evidence="8 10">
    <location>
        <position position="271"/>
    </location>
</feature>
<feature type="binding site" evidence="8">
    <location>
        <begin position="154"/>
        <end position="162"/>
    </location>
    <ligand>
        <name>ATP</name>
        <dbReference type="ChEBI" id="CHEBI:30616"/>
    </ligand>
</feature>
<feature type="binding site" evidence="8">
    <location>
        <position position="177"/>
    </location>
    <ligand>
        <name>ATP</name>
        <dbReference type="ChEBI" id="CHEBI:30616"/>
    </ligand>
</feature>
<feature type="modified residue" description="N-acetylserine" evidence="6">
    <location>
        <position position="2"/>
    </location>
</feature>
<feature type="modified residue" description="Phosphothreonine; by PDPK1" evidence="6">
    <location>
        <position position="305"/>
    </location>
</feature>
<feature type="modified residue" description="Phosphothreonine" evidence="6">
    <location>
        <position position="447"/>
    </location>
</feature>
<feature type="modified residue" description="Phosphoserine; by PKC/PRKCZ" evidence="6">
    <location>
        <position position="472"/>
    </location>
</feature>
<feature type="glycosylation site" description="O-linked (GlcNAc) threonine" evidence="2">
    <location>
        <position position="302"/>
    </location>
</feature>
<feature type="glycosylation site" description="O-linked (GlcNAc) threonine" evidence="2">
    <location>
        <position position="309"/>
    </location>
</feature>
<feature type="glycosylation site" description="O-linked (GlcNAc) serine; alternate" evidence="3">
    <location>
        <position position="472"/>
    </location>
</feature>
<feature type="disulfide bond" evidence="2">
    <location>
        <begin position="59"/>
        <end position="76"/>
    </location>
</feature>
<feature type="disulfide bond" evidence="4">
    <location>
        <begin position="293"/>
        <end position="307"/>
    </location>
</feature>
<feature type="splice variant" id="VSP_004948" description="In isoform 2." evidence="18">
    <original>YDDDGMDGMDNERRPHFPQFSYSASGRE</original>
    <variation>CQQSDCGMLGNWKKNDNKK</variation>
    <location>
        <begin position="452"/>
        <end position="479"/>
    </location>
</feature>
<feature type="mutagenesis site" description="Enhances kinase activity and causes low seizure threshold, sporadic tonic-clonic seizures, brain enlargement and ectopic neurons in the dentate hilus and molecular layer of the hippocampus." evidence="15">
    <original>D</original>
    <variation>V</variation>
    <location>
        <position position="219"/>
    </location>
</feature>
<reference key="1">
    <citation type="journal article" date="1999" name="J. Biol. Chem.">
        <title>A human protein kinase B gamma with regulatory phosphorylation sites in the activation loop and in the C-terminal hydrophobic domain.</title>
        <authorList>
            <person name="Brodbeck D."/>
            <person name="Cron P."/>
            <person name="Hemmings B.A."/>
        </authorList>
    </citation>
    <scope>NUCLEOTIDE SEQUENCE [MRNA]</scope>
</reference>
<reference key="2">
    <citation type="journal article" date="2001" name="J. Biol. Chem.">
        <title>Two splice variants of PKB gamma have different regulatory capacity depending on the presence or absence of the regulatory phosphorylation site Ser-472 in the C-terminal hydrophobic domain.</title>
        <authorList>
            <person name="Brodbeck D."/>
            <person name="Hill M.M."/>
            <person name="Hemmings B.A."/>
        </authorList>
    </citation>
    <scope>NUCLEOTIDE SEQUENCE [MRNA] (ISOFORMS 1 AND 2)</scope>
    <source>
        <tissue>Brain</tissue>
    </source>
</reference>
<reference key="3">
    <citation type="journal article" date="2005" name="Mol. Cell. Biol.">
        <title>Role for Akt3/protein kinase Bgamma in attainment of normal brain size.</title>
        <authorList>
            <person name="Easton R.M."/>
            <person name="Cho H."/>
            <person name="Roovers K."/>
            <person name="Shineman D.W."/>
            <person name="Mizrahi M."/>
            <person name="Forman M.S."/>
            <person name="Lee V.M."/>
            <person name="Szabolcs M."/>
            <person name="de Jong R."/>
            <person name="Oltersdorf T."/>
            <person name="Ludwig T."/>
            <person name="Efstratiadis A."/>
            <person name="Birnbaum M.J."/>
        </authorList>
    </citation>
    <scope>FUNCTION</scope>
</reference>
<reference key="4">
    <citation type="journal article" date="2008" name="Cell. Signal.">
        <title>A novel Akt/PKB-interacting protein promotes cell adhesion and inhibits familial amyotrophic lateral sclerosis-linked mutant SOD1-induced neuronal death via inhibition of PP2A-mediated dephosphorylation of Akt/PKB.</title>
        <authorList>
            <person name="Nawa M."/>
            <person name="Kanekura K."/>
            <person name="Hashimoto Y."/>
            <person name="Aiso S."/>
            <person name="Matsuoka M."/>
        </authorList>
    </citation>
    <scope>INTERACTION WITH BTBD10</scope>
</reference>
<reference key="5">
    <citation type="journal article" date="2008" name="FASEB J.">
        <title>VEGF stimulation of mitochondrial biogenesis: requirement of AKT3 kinase.</title>
        <authorList>
            <person name="Wright G.L."/>
            <person name="Maroulakou I.G."/>
            <person name="Eldridge J."/>
            <person name="Liby T.L."/>
            <person name="Sridharan V."/>
            <person name="Tsichlis P.N."/>
            <person name="Muise-Helmericks R.C."/>
        </authorList>
    </citation>
    <scope>DISRUPTION PHENOTYPE</scope>
</reference>
<reference key="6">
    <citation type="journal article" date="2010" name="Cell">
        <title>A tissue-specific atlas of mouse protein phosphorylation and expression.</title>
        <authorList>
            <person name="Huttlin E.L."/>
            <person name="Jedrychowski M.P."/>
            <person name="Elias J.E."/>
            <person name="Goswami T."/>
            <person name="Rad R."/>
            <person name="Beausoleil S.A."/>
            <person name="Villen J."/>
            <person name="Haas W."/>
            <person name="Sowa M.E."/>
            <person name="Gygi S.P."/>
        </authorList>
    </citation>
    <scope>IDENTIFICATION BY MASS SPECTROMETRY [LARGE SCALE ANALYSIS]</scope>
    <source>
        <tissue>Brain</tissue>
    </source>
</reference>
<reference key="7">
    <citation type="journal article" date="2011" name="Hum. Mol. Genet.">
        <title>A novel Akt3 mutation associated with enhanced kinase activity and seizure susceptibility in mice.</title>
        <authorList>
            <person name="Tokuda S."/>
            <person name="Mahaffey C.L."/>
            <person name="Monks B."/>
            <person name="Faulkner C.R."/>
            <person name="Birnbaum M.J."/>
            <person name="Danzer S.C."/>
            <person name="Frankel W.N."/>
        </authorList>
    </citation>
    <scope>MUTAGENESIS OF ASP-219</scope>
    <scope>FUNCTION</scope>
</reference>
<reference key="8">
    <citation type="journal article" date="2011" name="Cell. Signal.">
        <title>Akt signalling in health and disease.</title>
        <authorList>
            <person name="Hers I."/>
            <person name="Vincent E.E."/>
            <person name="Tavare J.M."/>
        </authorList>
    </citation>
    <scope>REVIEW ON FUNCTION</scope>
</reference>
<reference key="9">
    <citation type="journal article" date="2011" name="Sci. Signal.">
        <title>Akt determines cell fate through inhibition of the PERK-eIF2alpha phosphorylation pathway.</title>
        <authorList>
            <person name="Mounir Z."/>
            <person name="Krishnamoorthy J.L."/>
            <person name="Wang S."/>
            <person name="Papadopoulou B."/>
            <person name="Campbell S."/>
            <person name="Muller W.J."/>
            <person name="Hatzoglou M."/>
            <person name="Koromilas A.E."/>
        </authorList>
    </citation>
    <scope>FUNCTION</scope>
</reference>
<reference key="10">
    <citation type="journal article" date="2013" name="BMC Biochem.">
        <title>KCTD20, a relative of BTBD10, is a positive regulator of Akt.</title>
        <authorList>
            <person name="Nawa M."/>
            <person name="Matsuoka M."/>
        </authorList>
    </citation>
    <scope>INTERACTION WITH KCTD20</scope>
</reference>
<comment type="function">
    <text evidence="12 15 16">AKT3 is one of 3 closely related serine/threonine-protein kinases (AKT1, AKT2 and AKT3) called the AKT kinase, and which regulate many processes including metabolism, proliferation, cell survival, growth and angiogenesis. This is mediated through serine and/or threonine phosphorylation of a range of downstream substrates. Over 100 substrate candidates have been reported so far, but for most of them, no isoform specificity has been reported. AKT3 is the least studied AKT isoform. It plays an important role in brain development and is crucial for the viability of malignant glioma cells. AKT3 isoform may also be the key molecule in up-regulation and down-regulation of MMP13 via IL13. Required for the coordination of mitochondrial biogenesis with growth factor-induced increases in cellular energy demands. Down-regulation by RNA interference reduces the expression of the phosphorylated form of BAD, resulting in the induction of caspase-dependent apoptosis.</text>
</comment>
<comment type="catalytic activity">
    <reaction>
        <text>L-seryl-[protein] + ATP = O-phospho-L-seryl-[protein] + ADP + H(+)</text>
        <dbReference type="Rhea" id="RHEA:17989"/>
        <dbReference type="Rhea" id="RHEA-COMP:9863"/>
        <dbReference type="Rhea" id="RHEA-COMP:11604"/>
        <dbReference type="ChEBI" id="CHEBI:15378"/>
        <dbReference type="ChEBI" id="CHEBI:29999"/>
        <dbReference type="ChEBI" id="CHEBI:30616"/>
        <dbReference type="ChEBI" id="CHEBI:83421"/>
        <dbReference type="ChEBI" id="CHEBI:456216"/>
        <dbReference type="EC" id="2.7.11.1"/>
    </reaction>
</comment>
<comment type="catalytic activity">
    <reaction>
        <text>L-threonyl-[protein] + ATP = O-phospho-L-threonyl-[protein] + ADP + H(+)</text>
        <dbReference type="Rhea" id="RHEA:46608"/>
        <dbReference type="Rhea" id="RHEA-COMP:11060"/>
        <dbReference type="Rhea" id="RHEA-COMP:11605"/>
        <dbReference type="ChEBI" id="CHEBI:15378"/>
        <dbReference type="ChEBI" id="CHEBI:30013"/>
        <dbReference type="ChEBI" id="CHEBI:30616"/>
        <dbReference type="ChEBI" id="CHEBI:61977"/>
        <dbReference type="ChEBI" id="CHEBI:456216"/>
        <dbReference type="EC" id="2.7.11.1"/>
    </reaction>
</comment>
<comment type="activity regulation">
    <text evidence="1">Two specific sites, one in the kinase domain (Thr-305) and the other in the C-terminal regulatory region (Ser-472), need to be phosphorylated for its full activation. IGF-1 leads to the activation of AKT3, which may play a role in regulating cell survival.</text>
</comment>
<comment type="subunit">
    <text evidence="1 13 17">Interacts (via PH domain) with TCL1A; this enhances AKT3 phosphorylation and activation. Interacts with TRAF6 (By similarity). Interacts with KCTD20 (PubMed:24156551). Interacts with BTBD10 (PubMed:18160256).</text>
</comment>
<comment type="subcellular location">
    <subcellularLocation>
        <location evidence="1">Nucleus</location>
    </subcellularLocation>
    <subcellularLocation>
        <location>Cytoplasm</location>
    </subcellularLocation>
    <subcellularLocation>
        <location>Membrane</location>
        <topology>Peripheral membrane protein</topology>
    </subcellularLocation>
    <text>Membrane-associated after cell stimulation leading to its translocation.</text>
</comment>
<comment type="alternative products">
    <event type="alternative splicing"/>
    <isoform>
        <id>Q9WUA6-1</id>
        <name>1</name>
        <name>PKB gamma</name>
        <sequence type="displayed"/>
    </isoform>
    <isoform>
        <id>Q9WUA6-2</id>
        <name>2</name>
        <name>PKB gamma 1</name>
        <sequence type="described" ref="VSP_004948"/>
    </isoform>
</comment>
<comment type="tissue specificity">
    <text>Isoform 1 is expressed in prostate, testis, uterus and mammary gland and isoform 2 is expressed in prostate, testis and mammary gland.</text>
</comment>
<comment type="domain">
    <text>Binding of the PH domain to the phosphatidylinositol 3-kinase alpha (PI(3)K) results in its targeting to the plasma membrane.</text>
</comment>
<comment type="PTM">
    <text evidence="5 6">Phosphorylation on Thr-305 and Ser-472 is required for full activity. Phosphorylation of the activation loop at Thr-305 by PDPK1/PDK1 is a prerequisite for full activation (By similarity). Phosphorylation at Ser-472 by mTORC2 in response to growth factors plays a key role in AKT1 activation by facilitating subsequent phosphorylation of the activation loop by PDPK1/PDK1 (By similarity).</text>
</comment>
<comment type="PTM">
    <text evidence="1">Ubiquitinated. When fully phosphorylated and translocated into the nucleus, undergoes 'Lys-48'-polyubiquitination catalyzed by TTC3, leading to its degradation by the proteasome (By similarity).</text>
</comment>
<comment type="PTM">
    <text evidence="2">O-GlcNAcylation at Thr-302 and Thr-309 inhibits activating phosphorylation at Thr-305 via disrupting the interaction between AKT and PDPK1/PDK1.</text>
</comment>
<comment type="disruption phenotype">
    <text evidence="14">Results in the cytoplasmic accumulation of the master regulator of mitochondrial biogenesis, Ppargc1a, and a reduction in known Ppargc1a target genes, which leads to an abnormal mitochondrial phenotype in the brain tissue.</text>
</comment>
<comment type="similarity">
    <text evidence="19">Belongs to the protein kinase superfamily. AGC Ser/Thr protein kinase family. RAC subfamily.</text>
</comment>
<comment type="caution">
    <text evidence="19">In light of strong homologies in the primary amino acid sequence, the 3 AKT kinases were long surmised to play redundant and overlapping roles. More recent studies has brought into question the redundancy within AKT kinase isoforms and instead pointed to isoform specific functions in different cellular events and diseases. AKT1 is more specifically involved in cellular survival pathways, by inhibiting apoptotic processes; whereas AKT2 is more specific for the insulin receptor signaling pathway. Moreover, while AKT1 and AKT2 are often implicated in many aspects of cellular transformation, the 2 isoforms act in a complementary opposing manner. The role of AKT3 is less clear, though it appears to be predominantly expressed in brain.</text>
</comment>